<protein>
    <recommendedName>
        <fullName evidence="1">Urease accessory protein UreD</fullName>
    </recommendedName>
</protein>
<comment type="function">
    <text evidence="1">Required for maturation of urease via the functional incorporation of the urease nickel metallocenter.</text>
</comment>
<comment type="subunit">
    <text evidence="1">UreD, UreF and UreG form a complex that acts as a GTP-hydrolysis-dependent molecular chaperone, activating the urease apoprotein by helping to assemble the nickel containing metallocenter of UreC. The UreE protein probably delivers the nickel.</text>
</comment>
<comment type="subcellular location">
    <subcellularLocation>
        <location evidence="1">Cytoplasm</location>
    </subcellularLocation>
</comment>
<comment type="similarity">
    <text evidence="1">Belongs to the UreD family.</text>
</comment>
<proteinExistence type="inferred from homology"/>
<feature type="chain" id="PRO_0000340401" description="Urease accessory protein UreD">
    <location>
        <begin position="1"/>
        <end position="270"/>
    </location>
</feature>
<evidence type="ECO:0000255" key="1">
    <source>
        <dbReference type="HAMAP-Rule" id="MF_01384"/>
    </source>
</evidence>
<organism>
    <name type="scientific">Actinobacillus pleuropneumoniae serotype 3 (strain JL03)</name>
    <dbReference type="NCBI Taxonomy" id="434271"/>
    <lineage>
        <taxon>Bacteria</taxon>
        <taxon>Pseudomonadati</taxon>
        <taxon>Pseudomonadota</taxon>
        <taxon>Gammaproteobacteria</taxon>
        <taxon>Pasteurellales</taxon>
        <taxon>Pasteurellaceae</taxon>
        <taxon>Actinobacillus</taxon>
    </lineage>
</organism>
<name>URED_ACTPJ</name>
<reference key="1">
    <citation type="journal article" date="2008" name="PLoS ONE">
        <title>Genome biology of Actinobacillus pleuropneumoniae JL03, an isolate of serotype 3 prevalent in China.</title>
        <authorList>
            <person name="Xu Z."/>
            <person name="Zhou Y."/>
            <person name="Li L."/>
            <person name="Zhou R."/>
            <person name="Xiao S."/>
            <person name="Wan Y."/>
            <person name="Zhang S."/>
            <person name="Wang K."/>
            <person name="Li W."/>
            <person name="Li L."/>
            <person name="Jin H."/>
            <person name="Kang M."/>
            <person name="Dalai B."/>
            <person name="Li T."/>
            <person name="Liu L."/>
            <person name="Cheng Y."/>
            <person name="Zhang L."/>
            <person name="Xu T."/>
            <person name="Zheng H."/>
            <person name="Pu S."/>
            <person name="Wang B."/>
            <person name="Gu W."/>
            <person name="Zhang X.L."/>
            <person name="Zhu G.-F."/>
            <person name="Wang S."/>
            <person name="Zhao G.-P."/>
            <person name="Chen H."/>
        </authorList>
    </citation>
    <scope>NUCLEOTIDE SEQUENCE [LARGE SCALE GENOMIC DNA]</scope>
    <source>
        <strain>JL03</strain>
    </source>
</reference>
<keyword id="KW-0143">Chaperone</keyword>
<keyword id="KW-0963">Cytoplasm</keyword>
<keyword id="KW-0996">Nickel insertion</keyword>
<dbReference type="EMBL" id="CP000687">
    <property type="protein sequence ID" value="ABY70196.1"/>
    <property type="molecule type" value="Genomic_DNA"/>
</dbReference>
<dbReference type="RefSeq" id="WP_012263312.1">
    <property type="nucleotide sequence ID" value="NC_010278.1"/>
</dbReference>
<dbReference type="SMR" id="B0BRT7"/>
<dbReference type="KEGG" id="apj:APJL_1644"/>
<dbReference type="HOGENOM" id="CLU_056339_6_0_6"/>
<dbReference type="Proteomes" id="UP000008547">
    <property type="component" value="Chromosome"/>
</dbReference>
<dbReference type="GO" id="GO:0005737">
    <property type="term" value="C:cytoplasm"/>
    <property type="evidence" value="ECO:0007669"/>
    <property type="project" value="UniProtKB-SubCell"/>
</dbReference>
<dbReference type="GO" id="GO:0016151">
    <property type="term" value="F:nickel cation binding"/>
    <property type="evidence" value="ECO:0007669"/>
    <property type="project" value="UniProtKB-UniRule"/>
</dbReference>
<dbReference type="HAMAP" id="MF_01384">
    <property type="entry name" value="UreD"/>
    <property type="match status" value="1"/>
</dbReference>
<dbReference type="InterPro" id="IPR002669">
    <property type="entry name" value="UreD"/>
</dbReference>
<dbReference type="PANTHER" id="PTHR33643">
    <property type="entry name" value="UREASE ACCESSORY PROTEIN D"/>
    <property type="match status" value="1"/>
</dbReference>
<dbReference type="PANTHER" id="PTHR33643:SF1">
    <property type="entry name" value="UREASE ACCESSORY PROTEIN D"/>
    <property type="match status" value="1"/>
</dbReference>
<dbReference type="Pfam" id="PF01774">
    <property type="entry name" value="UreD"/>
    <property type="match status" value="1"/>
</dbReference>
<accession>B0BRT7</accession>
<gene>
    <name evidence="1" type="primary">ureD</name>
    <name type="synonym">ureH</name>
    <name type="ordered locus">APJL_1644</name>
</gene>
<sequence length="270" mass="30249">MQSKLLLSTKLTSQGKTQLDQYFVSPPFKVMTLPAYDDAWQNGLNAMQMSSSPGLLASDLFDIEISLADDTALSLNTQAFTRVQSMNEGDYATQKTCIKLGKNSRLFYLPHPLVLHKDSSFKQTTEIEMSEQSELIYGEIVAIGRVLNGERFAFRHFASYLRISYQNRPIIADRIQWLPAKMALTSLSQMEDFSHQGSLTYVNLAKNAVEIKAMVSELQALAAEQKNMLIGVSQLNEGGLMVRVLAHRADIIQHLFERIGQVLKAQSNIV</sequence>